<comment type="function">
    <text evidence="1">Removes the pyruvyl group from chorismate, with concomitant aromatization of the ring, to provide 4-hydroxybenzoate (4HB) for the ubiquinone pathway.</text>
</comment>
<comment type="catalytic activity">
    <reaction evidence="1">
        <text>chorismate = 4-hydroxybenzoate + pyruvate</text>
        <dbReference type="Rhea" id="RHEA:16505"/>
        <dbReference type="ChEBI" id="CHEBI:15361"/>
        <dbReference type="ChEBI" id="CHEBI:17879"/>
        <dbReference type="ChEBI" id="CHEBI:29748"/>
        <dbReference type="EC" id="4.1.3.40"/>
    </reaction>
</comment>
<comment type="pathway">
    <text evidence="1">Cofactor biosynthesis; ubiquinone biosynthesis.</text>
</comment>
<comment type="subunit">
    <text evidence="1">Monomer.</text>
</comment>
<comment type="subcellular location">
    <subcellularLocation>
        <location evidence="1">Cytoplasm</location>
    </subcellularLocation>
</comment>
<comment type="similarity">
    <text evidence="1">Belongs to the UbiC family.</text>
</comment>
<sequence length="165" mass="18748">MSHPALTRLRALRYFDAIPALEPHLLDWLLLEDSMTKRFEQQGKRVSVTLIREAFVGQSEVEEASGLLPSESRYWLREILLCADGEPWLAGRTVVPESTLCGPEQVLQHLGKTPLGRYLFTSSTLTRDFIEIGRDATLWGRRSRLRLSGKPLLLTELFLPASPLY</sequence>
<organism>
    <name type="scientific">Salmonella newport (strain SL254)</name>
    <dbReference type="NCBI Taxonomy" id="423368"/>
    <lineage>
        <taxon>Bacteria</taxon>
        <taxon>Pseudomonadati</taxon>
        <taxon>Pseudomonadota</taxon>
        <taxon>Gammaproteobacteria</taxon>
        <taxon>Enterobacterales</taxon>
        <taxon>Enterobacteriaceae</taxon>
        <taxon>Salmonella</taxon>
    </lineage>
</organism>
<keyword id="KW-0963">Cytoplasm</keyword>
<keyword id="KW-0456">Lyase</keyword>
<keyword id="KW-0670">Pyruvate</keyword>
<keyword id="KW-0831">Ubiquinone biosynthesis</keyword>
<protein>
    <recommendedName>
        <fullName evidence="1">Chorismate pyruvate-lyase</fullName>
        <shortName evidence="1">CL</shortName>
        <shortName evidence="1">CPL</shortName>
        <ecNumber evidence="1">4.1.3.40</ecNumber>
    </recommendedName>
</protein>
<feature type="chain" id="PRO_1000186536" description="Chorismate pyruvate-lyase">
    <location>
        <begin position="1"/>
        <end position="165"/>
    </location>
</feature>
<feature type="binding site" evidence="1">
    <location>
        <position position="35"/>
    </location>
    <ligand>
        <name>substrate</name>
    </ligand>
</feature>
<feature type="binding site" evidence="1">
    <location>
        <position position="77"/>
    </location>
    <ligand>
        <name>substrate</name>
    </ligand>
</feature>
<feature type="binding site" evidence="1">
    <location>
        <position position="115"/>
    </location>
    <ligand>
        <name>substrate</name>
    </ligand>
</feature>
<feature type="binding site" evidence="1">
    <location>
        <position position="156"/>
    </location>
    <ligand>
        <name>substrate</name>
    </ligand>
</feature>
<gene>
    <name evidence="1" type="primary">ubiC</name>
    <name type="ordered locus">SNSL254_A4576</name>
</gene>
<reference key="1">
    <citation type="journal article" date="2011" name="J. Bacteriol.">
        <title>Comparative genomics of 28 Salmonella enterica isolates: evidence for CRISPR-mediated adaptive sublineage evolution.</title>
        <authorList>
            <person name="Fricke W.F."/>
            <person name="Mammel M.K."/>
            <person name="McDermott P.F."/>
            <person name="Tartera C."/>
            <person name="White D.G."/>
            <person name="Leclerc J.E."/>
            <person name="Ravel J."/>
            <person name="Cebula T.A."/>
        </authorList>
    </citation>
    <scope>NUCLEOTIDE SEQUENCE [LARGE SCALE GENOMIC DNA]</scope>
    <source>
        <strain>SL254</strain>
    </source>
</reference>
<accession>B4T1S8</accession>
<evidence type="ECO:0000255" key="1">
    <source>
        <dbReference type="HAMAP-Rule" id="MF_01632"/>
    </source>
</evidence>
<dbReference type="EC" id="4.1.3.40" evidence="1"/>
<dbReference type="EMBL" id="CP001113">
    <property type="protein sequence ID" value="ACF61930.1"/>
    <property type="molecule type" value="Genomic_DNA"/>
</dbReference>
<dbReference type="RefSeq" id="WP_000019230.1">
    <property type="nucleotide sequence ID" value="NZ_CCMR01000003.1"/>
</dbReference>
<dbReference type="SMR" id="B4T1S8"/>
<dbReference type="KEGG" id="see:SNSL254_A4576"/>
<dbReference type="HOGENOM" id="CLU_096824_1_0_6"/>
<dbReference type="UniPathway" id="UPA00232"/>
<dbReference type="Proteomes" id="UP000008824">
    <property type="component" value="Chromosome"/>
</dbReference>
<dbReference type="GO" id="GO:0005829">
    <property type="term" value="C:cytosol"/>
    <property type="evidence" value="ECO:0007669"/>
    <property type="project" value="TreeGrafter"/>
</dbReference>
<dbReference type="GO" id="GO:0008813">
    <property type="term" value="F:chorismate lyase activity"/>
    <property type="evidence" value="ECO:0007669"/>
    <property type="project" value="UniProtKB-UniRule"/>
</dbReference>
<dbReference type="GO" id="GO:0042866">
    <property type="term" value="P:pyruvate biosynthetic process"/>
    <property type="evidence" value="ECO:0007669"/>
    <property type="project" value="UniProtKB-UniRule"/>
</dbReference>
<dbReference type="GO" id="GO:0006744">
    <property type="term" value="P:ubiquinone biosynthetic process"/>
    <property type="evidence" value="ECO:0007669"/>
    <property type="project" value="UniProtKB-UniRule"/>
</dbReference>
<dbReference type="FunFam" id="3.40.1410.10:FF:000002">
    <property type="entry name" value="Chorismate pyruvate-lyase"/>
    <property type="match status" value="1"/>
</dbReference>
<dbReference type="Gene3D" id="3.40.1410.10">
    <property type="entry name" value="Chorismate lyase-like"/>
    <property type="match status" value="1"/>
</dbReference>
<dbReference type="HAMAP" id="MF_01632">
    <property type="entry name" value="UbiC"/>
    <property type="match status" value="1"/>
</dbReference>
<dbReference type="InterPro" id="IPR007440">
    <property type="entry name" value="Chorismate--pyruvate_lyase"/>
</dbReference>
<dbReference type="InterPro" id="IPR028978">
    <property type="entry name" value="Chorismate_lyase_/UTRA_dom_sf"/>
</dbReference>
<dbReference type="NCBIfam" id="NF008656">
    <property type="entry name" value="PRK11655.1"/>
    <property type="match status" value="1"/>
</dbReference>
<dbReference type="PANTHER" id="PTHR38683">
    <property type="entry name" value="CHORISMATE PYRUVATE-LYASE"/>
    <property type="match status" value="1"/>
</dbReference>
<dbReference type="PANTHER" id="PTHR38683:SF1">
    <property type="entry name" value="CHORISMATE PYRUVATE-LYASE"/>
    <property type="match status" value="1"/>
</dbReference>
<dbReference type="Pfam" id="PF04345">
    <property type="entry name" value="Chor_lyase"/>
    <property type="match status" value="1"/>
</dbReference>
<dbReference type="SUPFAM" id="SSF64288">
    <property type="entry name" value="Chorismate lyase-like"/>
    <property type="match status" value="1"/>
</dbReference>
<name>UBIC_SALNS</name>
<proteinExistence type="inferred from homology"/>